<feature type="chain" id="PRO_1000049707" description="Large ribosomal subunit protein bL19">
    <location>
        <begin position="1"/>
        <end position="121"/>
    </location>
</feature>
<organism>
    <name type="scientific">Neisseria meningitidis serogroup C / serotype 2a (strain ATCC 700532 / DSM 15464 / FAM18)</name>
    <dbReference type="NCBI Taxonomy" id="272831"/>
    <lineage>
        <taxon>Bacteria</taxon>
        <taxon>Pseudomonadati</taxon>
        <taxon>Pseudomonadota</taxon>
        <taxon>Betaproteobacteria</taxon>
        <taxon>Neisseriales</taxon>
        <taxon>Neisseriaceae</taxon>
        <taxon>Neisseria</taxon>
    </lineage>
</organism>
<keyword id="KW-0687">Ribonucleoprotein</keyword>
<keyword id="KW-0689">Ribosomal protein</keyword>
<proteinExistence type="inferred from homology"/>
<gene>
    <name evidence="1" type="primary">rplS</name>
    <name type="ordered locus">NMC0531</name>
</gene>
<accession>A1KSJ8</accession>
<reference key="1">
    <citation type="journal article" date="2007" name="PLoS Genet.">
        <title>Meningococcal genetic variation mechanisms viewed through comparative analysis of serogroup C strain FAM18.</title>
        <authorList>
            <person name="Bentley S.D."/>
            <person name="Vernikos G.S."/>
            <person name="Snyder L.A.S."/>
            <person name="Churcher C."/>
            <person name="Arrowsmith C."/>
            <person name="Chillingworth T."/>
            <person name="Cronin A."/>
            <person name="Davis P.H."/>
            <person name="Holroyd N.E."/>
            <person name="Jagels K."/>
            <person name="Maddison M."/>
            <person name="Moule S."/>
            <person name="Rabbinowitsch E."/>
            <person name="Sharp S."/>
            <person name="Unwin L."/>
            <person name="Whitehead S."/>
            <person name="Quail M.A."/>
            <person name="Achtman M."/>
            <person name="Barrell B.G."/>
            <person name="Saunders N.J."/>
            <person name="Parkhill J."/>
        </authorList>
    </citation>
    <scope>NUCLEOTIDE SEQUENCE [LARGE SCALE GENOMIC DNA]</scope>
    <source>
        <strain>ATCC 700532 / DSM 15464 / FAM18</strain>
    </source>
</reference>
<dbReference type="EMBL" id="AM421808">
    <property type="protein sequence ID" value="CAM09828.1"/>
    <property type="molecule type" value="Genomic_DNA"/>
</dbReference>
<dbReference type="RefSeq" id="WP_002217809.1">
    <property type="nucleotide sequence ID" value="NC_008767.1"/>
</dbReference>
<dbReference type="SMR" id="A1KSJ8"/>
<dbReference type="GeneID" id="86929750"/>
<dbReference type="KEGG" id="nmc:NMC0531"/>
<dbReference type="HOGENOM" id="CLU_103507_2_1_4"/>
<dbReference type="Proteomes" id="UP000002286">
    <property type="component" value="Chromosome"/>
</dbReference>
<dbReference type="GO" id="GO:0022625">
    <property type="term" value="C:cytosolic large ribosomal subunit"/>
    <property type="evidence" value="ECO:0007669"/>
    <property type="project" value="TreeGrafter"/>
</dbReference>
<dbReference type="GO" id="GO:0003735">
    <property type="term" value="F:structural constituent of ribosome"/>
    <property type="evidence" value="ECO:0007669"/>
    <property type="project" value="InterPro"/>
</dbReference>
<dbReference type="GO" id="GO:0006412">
    <property type="term" value="P:translation"/>
    <property type="evidence" value="ECO:0007669"/>
    <property type="project" value="UniProtKB-UniRule"/>
</dbReference>
<dbReference type="FunFam" id="2.30.30.790:FF:000001">
    <property type="entry name" value="50S ribosomal protein L19"/>
    <property type="match status" value="1"/>
</dbReference>
<dbReference type="Gene3D" id="2.30.30.790">
    <property type="match status" value="1"/>
</dbReference>
<dbReference type="HAMAP" id="MF_00402">
    <property type="entry name" value="Ribosomal_bL19"/>
    <property type="match status" value="1"/>
</dbReference>
<dbReference type="InterPro" id="IPR001857">
    <property type="entry name" value="Ribosomal_bL19"/>
</dbReference>
<dbReference type="InterPro" id="IPR018257">
    <property type="entry name" value="Ribosomal_bL19_CS"/>
</dbReference>
<dbReference type="InterPro" id="IPR038657">
    <property type="entry name" value="Ribosomal_bL19_sf"/>
</dbReference>
<dbReference type="InterPro" id="IPR008991">
    <property type="entry name" value="Translation_prot_SH3-like_sf"/>
</dbReference>
<dbReference type="NCBIfam" id="TIGR01024">
    <property type="entry name" value="rplS_bact"/>
    <property type="match status" value="1"/>
</dbReference>
<dbReference type="PANTHER" id="PTHR15680:SF9">
    <property type="entry name" value="LARGE RIBOSOMAL SUBUNIT PROTEIN BL19M"/>
    <property type="match status" value="1"/>
</dbReference>
<dbReference type="PANTHER" id="PTHR15680">
    <property type="entry name" value="RIBOSOMAL PROTEIN L19"/>
    <property type="match status" value="1"/>
</dbReference>
<dbReference type="Pfam" id="PF01245">
    <property type="entry name" value="Ribosomal_L19"/>
    <property type="match status" value="1"/>
</dbReference>
<dbReference type="PIRSF" id="PIRSF002191">
    <property type="entry name" value="Ribosomal_L19"/>
    <property type="match status" value="1"/>
</dbReference>
<dbReference type="PRINTS" id="PR00061">
    <property type="entry name" value="RIBOSOMALL19"/>
</dbReference>
<dbReference type="SUPFAM" id="SSF50104">
    <property type="entry name" value="Translation proteins SH3-like domain"/>
    <property type="match status" value="1"/>
</dbReference>
<dbReference type="PROSITE" id="PS01015">
    <property type="entry name" value="RIBOSOMAL_L19"/>
    <property type="match status" value="1"/>
</dbReference>
<name>RL19_NEIMF</name>
<evidence type="ECO:0000255" key="1">
    <source>
        <dbReference type="HAMAP-Rule" id="MF_00402"/>
    </source>
</evidence>
<evidence type="ECO:0000305" key="2"/>
<protein>
    <recommendedName>
        <fullName evidence="1">Large ribosomal subunit protein bL19</fullName>
    </recommendedName>
    <alternativeName>
        <fullName evidence="2">50S ribosomal protein L19</fullName>
    </alternativeName>
</protein>
<sequence>MNLIQQLEQEEIARLNKEIPEFAPGDTVVVSVRVVEGTRSRLQAYEGVVIARRNRGLNSNFIVRKISSGEGVERTFQLYSPTVEKIEVKRRGDVRRAKLYYLRGLTGKAARIKEKLPARKG</sequence>
<comment type="function">
    <text evidence="1">This protein is located at the 30S-50S ribosomal subunit interface and may play a role in the structure and function of the aminoacyl-tRNA binding site.</text>
</comment>
<comment type="similarity">
    <text evidence="1">Belongs to the bacterial ribosomal protein bL19 family.</text>
</comment>